<evidence type="ECO:0000255" key="1"/>
<evidence type="ECO:0000255" key="2">
    <source>
        <dbReference type="PROSITE-ProRule" id="PRU00541"/>
    </source>
</evidence>
<evidence type="ECO:0000255" key="3">
    <source>
        <dbReference type="PROSITE-ProRule" id="PRU00542"/>
    </source>
</evidence>
<evidence type="ECO:0000256" key="4">
    <source>
        <dbReference type="SAM" id="MobiDB-lite"/>
    </source>
</evidence>
<evidence type="ECO:0000269" key="5">
    <source>
    </source>
</evidence>
<evidence type="ECO:0000269" key="6">
    <source>
    </source>
</evidence>
<evidence type="ECO:0000269" key="7">
    <source>
    </source>
</evidence>
<evidence type="ECO:0000269" key="8">
    <source>
    </source>
</evidence>
<evidence type="ECO:0000269" key="9">
    <source>
    </source>
</evidence>
<evidence type="ECO:0000303" key="10">
    <source>
    </source>
</evidence>
<evidence type="ECO:0000303" key="11">
    <source>
    </source>
</evidence>
<evidence type="ECO:0000303" key="12">
    <source>
    </source>
</evidence>
<evidence type="ECO:0000303" key="13">
    <source>
    </source>
</evidence>
<evidence type="ECO:0000303" key="14">
    <source>
    </source>
</evidence>
<evidence type="ECO:0000303" key="15">
    <source ref="2"/>
</evidence>
<evidence type="ECO:0000305" key="16"/>
<evidence type="ECO:0000312" key="17">
    <source>
        <dbReference type="HGNC" id="HGNC:18676"/>
    </source>
</evidence>
<evidence type="ECO:0007744" key="18">
    <source>
        <dbReference type="PDB" id="8HK1"/>
    </source>
</evidence>
<evidence type="ECO:0007744" key="19">
    <source>
    </source>
</evidence>
<evidence type="ECO:0007744" key="20">
    <source>
    </source>
</evidence>
<evidence type="ECO:0007744" key="21">
    <source>
    </source>
</evidence>
<evidence type="ECO:0007744" key="22">
    <source>
    </source>
</evidence>
<evidence type="ECO:0007744" key="23">
    <source>
    </source>
</evidence>
<evidence type="ECO:0007744" key="24">
    <source>
    </source>
</evidence>
<evidence type="ECO:0007744" key="25">
    <source>
    </source>
</evidence>
<evidence type="ECO:0007744" key="26">
    <source>
    </source>
</evidence>
<evidence type="ECO:0007744" key="27">
    <source>
    </source>
</evidence>
<evidence type="ECO:0007829" key="28">
    <source>
        <dbReference type="PDB" id="7EVN"/>
    </source>
</evidence>
<evidence type="ECO:0007829" key="29">
    <source>
        <dbReference type="PDB" id="8DPE"/>
    </source>
</evidence>
<sequence>MNWNKGGPGTKRGFGFGGFAISAGKKEEPKLPQQSHSAFGATSSSSGFGKSAPPQLPSFYKIGSKRANFDEENAYFEDEEEDSSNVDLPYIPAENSPTRQQFHSKPVDSDSDDDPLEAFMAEVEDQAARDMKRLEEKDKERKNVKGIRDDIEEEDDQEAYFRYMAENPTAGVVQEEEEDNLEYDSDGNPIAPTKKIIDPLPPIDHSEIDYPPFEKNFYNEHEEITNLTPQQLIDLRHKLNLRVSGAAPPRPGSSFAHFGFDEQLMHQIRKSEYTQPTPIQCQGVPVALSGRDMIGIAKTGSGKTAAFIWPMLIHIMDQKELEPGDGPIAVIVCPTRELCQQIHAECKRFGKAYNLRSVAVYGGGSMWEQAKALQEGAEIVVCTPGRLIDHVKKKATNLQRVSYLVFDEADRMFDMGFEYQVRSIASHVRPDRQTLLFSATFRKKIEKLARDILIDPIRVVQGDIGEANEDVTQIVEILHSGPSKWNWLTRRLVEFTSSGSVLLFVTKKANAEELANNLKQEGHNLGLLHGDMDQSERNKVISDFKKKDIPVLVATDVAARGLDIPSIKTVINYDVARDIDTHTHRIGRTGRAGEKGVAYTLLTPKDSNFAGDLVRNLEGANQHVSKELLDLAMQNAWFRKSRFKGGKGKKLNIGGGGLGYRERPGLGSENMDRGNNNVMSNYEAYKPSTGAMGDRLTAMKAAFQSQYKSHFVAASLSNQKAGSSAAGASGWTSAGSLNSVPTNSAQQGHNSPDSPVTSAAKGIPGFGNTGNISGAPVTYPSAGAQGVNNTASGNNSREGTGGSNGKRERYTENRGSSRHSHGETGNRHSDSPRHGDGGRHGDGYRHPESSSRHTDGHRHGENRHGGSAGRHGENRGANDGRNGESRKEAFNRESKMEPKMEPKVDSSKMDKVDSKTDKTADGFAVPEPPKRKKSRWDS</sequence>
<organism>
    <name type="scientific">Homo sapiens</name>
    <name type="common">Human</name>
    <dbReference type="NCBI Taxonomy" id="9606"/>
    <lineage>
        <taxon>Eukaryota</taxon>
        <taxon>Metazoa</taxon>
        <taxon>Chordata</taxon>
        <taxon>Craniata</taxon>
        <taxon>Vertebrata</taxon>
        <taxon>Euteleostomi</taxon>
        <taxon>Mammalia</taxon>
        <taxon>Eutheria</taxon>
        <taxon>Euarchontoglires</taxon>
        <taxon>Primates</taxon>
        <taxon>Haplorrhini</taxon>
        <taxon>Catarrhini</taxon>
        <taxon>Hominidae</taxon>
        <taxon>Homo</taxon>
    </lineage>
</organism>
<feature type="chain" id="PRO_0000280058" description="ATP-dependent RNA helicase DDX42">
    <location>
        <begin position="1"/>
        <end position="938"/>
    </location>
</feature>
<feature type="domain" description="Helicase ATP-binding" evidence="2">
    <location>
        <begin position="284"/>
        <end position="459"/>
    </location>
</feature>
<feature type="domain" description="Helicase C-terminal" evidence="3">
    <location>
        <begin position="487"/>
        <end position="632"/>
    </location>
</feature>
<feature type="region of interest" description="Disordered" evidence="4">
    <location>
        <begin position="1"/>
        <end position="114"/>
    </location>
</feature>
<feature type="region of interest" description="Disordered" evidence="4">
    <location>
        <begin position="182"/>
        <end position="203"/>
    </location>
</feature>
<feature type="region of interest" description="Disordered" evidence="4">
    <location>
        <begin position="737"/>
        <end position="938"/>
    </location>
</feature>
<feature type="region of interest" description="Necessary for interaction with TP53BP2" evidence="8">
    <location>
        <begin position="738"/>
        <end position="833"/>
    </location>
</feature>
<feature type="coiled-coil region" evidence="1">
    <location>
        <begin position="116"/>
        <end position="157"/>
    </location>
</feature>
<feature type="short sequence motif" description="Q motif">
    <location>
        <begin position="253"/>
        <end position="281"/>
    </location>
</feature>
<feature type="short sequence motif" description="DEAD box">
    <location>
        <begin position="407"/>
        <end position="410"/>
    </location>
</feature>
<feature type="compositionally biased region" description="Gly residues" evidence="4">
    <location>
        <begin position="1"/>
        <end position="18"/>
    </location>
</feature>
<feature type="compositionally biased region" description="Low complexity" evidence="4">
    <location>
        <begin position="35"/>
        <end position="52"/>
    </location>
</feature>
<feature type="compositionally biased region" description="Acidic residues" evidence="4">
    <location>
        <begin position="70"/>
        <end position="84"/>
    </location>
</feature>
<feature type="compositionally biased region" description="Polar residues" evidence="4">
    <location>
        <begin position="737"/>
        <end position="757"/>
    </location>
</feature>
<feature type="compositionally biased region" description="Polar residues" evidence="4">
    <location>
        <begin position="786"/>
        <end position="798"/>
    </location>
</feature>
<feature type="compositionally biased region" description="Basic and acidic residues" evidence="4">
    <location>
        <begin position="820"/>
        <end position="920"/>
    </location>
</feature>
<feature type="binding site" evidence="2">
    <location>
        <begin position="297"/>
        <end position="304"/>
    </location>
    <ligand>
        <name>ATP</name>
        <dbReference type="ChEBI" id="CHEBI:30616"/>
    </ligand>
</feature>
<feature type="modified residue" description="N6-acetyllysine" evidence="21">
    <location>
        <position position="5"/>
    </location>
</feature>
<feature type="modified residue" description="Omega-N-methylarginine" evidence="25">
    <location>
        <position position="12"/>
    </location>
</feature>
<feature type="modified residue" description="Phosphoserine" evidence="24">
    <location>
        <position position="58"/>
    </location>
</feature>
<feature type="modified residue" description="Phosphoserine" evidence="26">
    <location>
        <position position="96"/>
    </location>
</feature>
<feature type="modified residue" description="Phosphoserine" evidence="20">
    <location>
        <position position="104"/>
    </location>
</feature>
<feature type="modified residue" description="Phosphoserine" evidence="19 20 22 23">
    <location>
        <position position="109"/>
    </location>
</feature>
<feature type="modified residue" description="Phosphoserine" evidence="19 20 22 23">
    <location>
        <position position="111"/>
    </location>
</feature>
<feature type="modified residue" description="Phosphoserine" evidence="20 24">
    <location>
        <position position="185"/>
    </location>
</feature>
<feature type="modified residue" description="Phosphoserine" evidence="20 24">
    <location>
        <position position="754"/>
    </location>
</feature>
<feature type="cross-link" description="Glycyl lysine isopeptide (Lys-Gly) (interchain with G-Cter in SUMO2)" evidence="27">
    <location>
        <position position="899"/>
    </location>
</feature>
<feature type="splice variant" id="VSP_023518" description="In isoform 2." evidence="10 12 13 15">
    <location>
        <begin position="1"/>
        <end position="119"/>
    </location>
</feature>
<feature type="helix" evidence="28">
    <location>
        <begin position="71"/>
        <end position="76"/>
    </location>
</feature>
<feature type="helix" evidence="28">
    <location>
        <begin position="115"/>
        <end position="131"/>
    </location>
</feature>
<feature type="helix" evidence="28">
    <location>
        <begin position="149"/>
        <end position="152"/>
    </location>
</feature>
<feature type="helix" evidence="28">
    <location>
        <begin position="156"/>
        <end position="166"/>
    </location>
</feature>
<feature type="helix" evidence="29">
    <location>
        <begin position="222"/>
        <end position="225"/>
    </location>
</feature>
<feature type="helix" evidence="29">
    <location>
        <begin position="229"/>
        <end position="238"/>
    </location>
</feature>
<feature type="strand" evidence="29">
    <location>
        <begin position="241"/>
        <end position="247"/>
    </location>
</feature>
<feature type="helix" evidence="29">
    <location>
        <begin position="255"/>
        <end position="258"/>
    </location>
</feature>
<feature type="helix" evidence="29">
    <location>
        <begin position="262"/>
        <end position="270"/>
    </location>
</feature>
<feature type="helix" evidence="29">
    <location>
        <begin position="278"/>
        <end position="288"/>
    </location>
</feature>
<feature type="strand" evidence="29">
    <location>
        <begin position="293"/>
        <end position="296"/>
    </location>
</feature>
<feature type="helix" evidence="29">
    <location>
        <begin position="303"/>
        <end position="316"/>
    </location>
</feature>
<feature type="strand" evidence="29">
    <location>
        <begin position="328"/>
        <end position="332"/>
    </location>
</feature>
<feature type="helix" evidence="29">
    <location>
        <begin position="336"/>
        <end position="350"/>
    </location>
</feature>
<feature type="helix" evidence="29">
    <location>
        <begin position="351"/>
        <end position="353"/>
    </location>
</feature>
<feature type="strand" evidence="29">
    <location>
        <begin position="357"/>
        <end position="360"/>
    </location>
</feature>
<feature type="helix" evidence="29">
    <location>
        <begin position="366"/>
        <end position="375"/>
    </location>
</feature>
<feature type="strand" evidence="29">
    <location>
        <begin position="378"/>
        <end position="382"/>
    </location>
</feature>
<feature type="helix" evidence="29">
    <location>
        <begin position="384"/>
        <end position="392"/>
    </location>
</feature>
<feature type="strand" evidence="29">
    <location>
        <begin position="403"/>
        <end position="406"/>
    </location>
</feature>
<feature type="helix" evidence="29">
    <location>
        <begin position="409"/>
        <end position="414"/>
    </location>
</feature>
<feature type="helix" evidence="29">
    <location>
        <begin position="418"/>
        <end position="427"/>
    </location>
</feature>
<feature type="strand" evidence="29">
    <location>
        <begin position="432"/>
        <end position="440"/>
    </location>
</feature>
<feature type="helix" evidence="29">
    <location>
        <begin position="443"/>
        <end position="452"/>
    </location>
</feature>
<feature type="strand" evidence="29">
    <location>
        <begin position="457"/>
        <end position="461"/>
    </location>
</feature>
<feature type="helix" evidence="29">
    <location>
        <begin position="462"/>
        <end position="464"/>
    </location>
</feature>
<feature type="strand" evidence="29">
    <location>
        <begin position="472"/>
        <end position="477"/>
    </location>
</feature>
<feature type="helix" evidence="29">
    <location>
        <begin position="481"/>
        <end position="483"/>
    </location>
</feature>
<feature type="helix" evidence="29">
    <location>
        <begin position="484"/>
        <end position="496"/>
    </location>
</feature>
<feature type="strand" evidence="29">
    <location>
        <begin position="499"/>
        <end position="507"/>
    </location>
</feature>
<feature type="helix" evidence="29">
    <location>
        <begin position="508"/>
        <end position="520"/>
    </location>
</feature>
<feature type="strand" evidence="29">
    <location>
        <begin position="525"/>
        <end position="528"/>
    </location>
</feature>
<feature type="helix" evidence="29">
    <location>
        <begin position="534"/>
        <end position="545"/>
    </location>
</feature>
<feature type="strand" evidence="29">
    <location>
        <begin position="548"/>
        <end position="555"/>
    </location>
</feature>
<feature type="helix" evidence="29">
    <location>
        <begin position="556"/>
        <end position="558"/>
    </location>
</feature>
<feature type="strand" evidence="29">
    <location>
        <begin position="567"/>
        <end position="572"/>
    </location>
</feature>
<feature type="helix" evidence="29">
    <location>
        <begin position="579"/>
        <end position="586"/>
    </location>
</feature>
<feature type="turn" evidence="29">
    <location>
        <begin position="590"/>
        <end position="593"/>
    </location>
</feature>
<feature type="strand" evidence="29">
    <location>
        <begin position="597"/>
        <end position="602"/>
    </location>
</feature>
<feature type="helix" evidence="29">
    <location>
        <begin position="604"/>
        <end position="606"/>
    </location>
</feature>
<feature type="helix" evidence="29">
    <location>
        <begin position="607"/>
        <end position="619"/>
    </location>
</feature>
<feature type="helix" evidence="29">
    <location>
        <begin position="626"/>
        <end position="632"/>
    </location>
</feature>
<feature type="helix" evidence="29">
    <location>
        <begin position="636"/>
        <end position="639"/>
    </location>
</feature>
<name>DDX42_HUMAN</name>
<accession>Q86XP3</accession>
<accession>A6NML1</accession>
<accession>A8KA43</accession>
<accession>O75619</accession>
<accession>Q68G51</accession>
<accession>Q96BK1</accession>
<accession>Q96HR7</accession>
<accession>Q9Y3V8</accession>
<comment type="function">
    <text evidence="6 7 8 9">ATP-dependent RNA helicase that binds to partially double-stranded RNAs (dsRNAs) in order to unwind RNA secondary structures (PubMed:16397294). Unwinding is promoted in the presence of single-strand binding proteins (PubMed:16397294). Also mediates RNA duplex formation thereby displacing the single-strand RNA binding protein (PubMed:16397294). ATP and ADP modulate its activity: ATP binding and hydrolysis by DDX42 triggers RNA strand separation, whereas the ADP-bound form of the protein triggers annealing of complementary RNA strands (PubMed:16397294). Required for assembly of the 17S U2 SnRNP complex of the spliceosome, a large ribonucleoprotein complex that removes introns from transcribed pre-mRNAs: DDX42 associates transiently with the SF3B subcomplex of the 17S U2 SnRNP complex and is released after fulfilling its role in the assembly of 17S U2 SnRNP (PubMed:12234937, PubMed:36797247). Involved in the survival of cells by interacting with TP53BP2 and thereby counteracting the apoptosis-stimulating activity of TP53BP2 (PubMed:19377511). Relocalizes TP53BP2 to the cytoplasm (PubMed:19377511).</text>
</comment>
<comment type="catalytic activity">
    <reaction evidence="7">
        <text>ATP + H2O = ADP + phosphate + H(+)</text>
        <dbReference type="Rhea" id="RHEA:13065"/>
        <dbReference type="ChEBI" id="CHEBI:15377"/>
        <dbReference type="ChEBI" id="CHEBI:15378"/>
        <dbReference type="ChEBI" id="CHEBI:30616"/>
        <dbReference type="ChEBI" id="CHEBI:43474"/>
        <dbReference type="ChEBI" id="CHEBI:456216"/>
        <dbReference type="EC" id="3.6.4.13"/>
    </reaction>
</comment>
<comment type="subunit">
    <text evidence="6 8 9">Transient component of the SF3B subcomplex of the 17S U2 SnRNP complex (PubMed:12234937, PubMed:36797247). Interacts (via the C-terminus) with TP53BP2; the interaction is not inhibitied by TP53BP2 ubiquitination and is independent of p53/TP53 (PubMed:19377511).</text>
</comment>
<comment type="interaction">
    <interactant intactId="EBI-722353">
        <id>Q86XP3</id>
    </interactant>
    <interactant intactId="EBI-2462271">
        <id>Q15428</id>
        <label>SF3A2</label>
    </interactant>
    <organismsDiffer>false</organismsDiffer>
    <experiments>2</experiments>
</comment>
<comment type="interaction">
    <interactant intactId="EBI-722353">
        <id>Q86XP3</id>
    </interactant>
    <interactant intactId="EBI-348469">
        <id>Q15427</id>
        <label>SF3B4</label>
    </interactant>
    <organismsDiffer>false</organismsDiffer>
    <experiments>3</experiments>
</comment>
<comment type="subcellular location">
    <subcellularLocation>
        <location evidence="8">Cytoplasm</location>
    </subcellularLocation>
    <subcellularLocation>
        <location evidence="7 8">Nucleus</location>
    </subcellularLocation>
</comment>
<comment type="subcellular location">
    <molecule>Isoform 2</molecule>
    <subcellularLocation>
        <location evidence="6">Nucleus</location>
        <location evidence="6">Cajal body</location>
    </subcellularLocation>
    <subcellularLocation>
        <location evidence="6">Nucleus speckle</location>
    </subcellularLocation>
</comment>
<comment type="alternative products">
    <event type="alternative splicing"/>
    <isoform>
        <id>Q86XP3-1</id>
        <name>1</name>
        <sequence type="displayed"/>
    </isoform>
    <isoform>
        <id>Q86XP3-2</id>
        <name>2</name>
        <sequence type="described" ref="VSP_023518"/>
    </isoform>
</comment>
<comment type="tissue specificity">
    <text evidence="5 7">Expressed in several cell lines (at protein level). Expressed in liver, lung, tonsil, thymus, muscle and pancreatic islets.</text>
</comment>
<comment type="similarity">
    <text evidence="16">Belongs to the DEAD box helicase family. DDX42 subfamily.</text>
</comment>
<comment type="sequence caution" evidence="16">
    <conflict type="frameshift">
        <sequence resource="EMBL-CDS" id="AAC32396"/>
    </conflict>
</comment>
<proteinExistence type="evidence at protein level"/>
<protein>
    <recommendedName>
        <fullName>ATP-dependent RNA helicase DDX42</fullName>
        <ecNumber evidence="7">3.6.4.13</ecNumber>
    </recommendedName>
    <alternativeName>
        <fullName>DEAD box protein 42</fullName>
    </alternativeName>
    <alternativeName>
        <fullName evidence="10">RNA helicase-like protein</fullName>
        <shortName evidence="10">RHELP</shortName>
    </alternativeName>
    <alternativeName>
        <fullName evidence="15">RNA helicase-related protein</fullName>
        <shortName>RNAHP</shortName>
    </alternativeName>
    <alternativeName>
        <fullName>SF3b DEAD box protein</fullName>
    </alternativeName>
    <alternativeName>
        <fullName evidence="11">Splicing factor 3B-associated 125 kDa protein</fullName>
        <shortName evidence="11">SF3b125</shortName>
    </alternativeName>
</protein>
<keyword id="KW-0002">3D-structure</keyword>
<keyword id="KW-0007">Acetylation</keyword>
<keyword id="KW-0025">Alternative splicing</keyword>
<keyword id="KW-0067">ATP-binding</keyword>
<keyword id="KW-0175">Coiled coil</keyword>
<keyword id="KW-0963">Cytoplasm</keyword>
<keyword id="KW-0347">Helicase</keyword>
<keyword id="KW-0378">Hydrolase</keyword>
<keyword id="KW-1017">Isopeptide bond</keyword>
<keyword id="KW-0488">Methylation</keyword>
<keyword id="KW-0547">Nucleotide-binding</keyword>
<keyword id="KW-0539">Nucleus</keyword>
<keyword id="KW-0597">Phosphoprotein</keyword>
<keyword id="KW-1267">Proteomics identification</keyword>
<keyword id="KW-1185">Reference proteome</keyword>
<keyword id="KW-0694">RNA-binding</keyword>
<keyword id="KW-0832">Ubl conjugation</keyword>
<dbReference type="EC" id="3.6.4.13" evidence="7"/>
<dbReference type="EMBL" id="AF083255">
    <property type="protein sequence ID" value="AAC32396.1"/>
    <property type="status" value="ALT_FRAME"/>
    <property type="molecule type" value="mRNA"/>
</dbReference>
<dbReference type="EMBL" id="AB036090">
    <property type="protein sequence ID" value="BAC66466.1"/>
    <property type="molecule type" value="mRNA"/>
</dbReference>
<dbReference type="EMBL" id="AK292908">
    <property type="protein sequence ID" value="BAF85597.1"/>
    <property type="molecule type" value="mRNA"/>
</dbReference>
<dbReference type="EMBL" id="AC015651">
    <property type="status" value="NOT_ANNOTATED_CDS"/>
    <property type="molecule type" value="Genomic_DNA"/>
</dbReference>
<dbReference type="EMBL" id="CH471109">
    <property type="protein sequence ID" value="EAW94277.1"/>
    <property type="molecule type" value="Genomic_DNA"/>
</dbReference>
<dbReference type="EMBL" id="BC008208">
    <property type="protein sequence ID" value="AAH08208.1"/>
    <property type="molecule type" value="mRNA"/>
</dbReference>
<dbReference type="EMBL" id="BC015505">
    <property type="protein sequence ID" value="AAH15505.1"/>
    <property type="molecule type" value="mRNA"/>
</dbReference>
<dbReference type="EMBL" id="BC078667">
    <property type="protein sequence ID" value="AAH78667.1"/>
    <property type="molecule type" value="mRNA"/>
</dbReference>
<dbReference type="EMBL" id="BC093081">
    <property type="protein sequence ID" value="AAH93081.1"/>
    <property type="molecule type" value="mRNA"/>
</dbReference>
<dbReference type="EMBL" id="AL050096">
    <property type="protein sequence ID" value="CAB43268.1"/>
    <property type="molecule type" value="mRNA"/>
</dbReference>
<dbReference type="EMBL" id="BK000566">
    <property type="protein sequence ID" value="DAA00077.1"/>
    <property type="molecule type" value="mRNA"/>
</dbReference>
<dbReference type="CCDS" id="CCDS32704.1">
    <molecule id="Q86XP3-1"/>
</dbReference>
<dbReference type="PIR" id="T08745">
    <property type="entry name" value="T08745"/>
</dbReference>
<dbReference type="RefSeq" id="NP_031398.2">
    <molecule id="Q86XP3-1"/>
    <property type="nucleotide sequence ID" value="NM_007372.3"/>
</dbReference>
<dbReference type="RefSeq" id="NP_987095.1">
    <molecule id="Q86XP3-1"/>
    <property type="nucleotide sequence ID" value="NM_203499.3"/>
</dbReference>
<dbReference type="RefSeq" id="XP_006721720.1">
    <property type="nucleotide sequence ID" value="XM_006721657.1"/>
</dbReference>
<dbReference type="RefSeq" id="XP_016879600.1">
    <property type="nucleotide sequence ID" value="XM_017024111.1"/>
</dbReference>
<dbReference type="RefSeq" id="XP_047291237.1">
    <molecule id="Q86XP3-1"/>
    <property type="nucleotide sequence ID" value="XM_047435281.1"/>
</dbReference>
<dbReference type="RefSeq" id="XP_047291238.1">
    <molecule id="Q86XP3-1"/>
    <property type="nucleotide sequence ID" value="XM_047435282.1"/>
</dbReference>
<dbReference type="RefSeq" id="XP_054170905.1">
    <molecule id="Q86XP3-1"/>
    <property type="nucleotide sequence ID" value="XM_054314930.1"/>
</dbReference>
<dbReference type="RefSeq" id="XP_054170906.1">
    <molecule id="Q86XP3-1"/>
    <property type="nucleotide sequence ID" value="XM_054314931.1"/>
</dbReference>
<dbReference type="PDB" id="7EVN">
    <property type="method" value="EM"/>
    <property type="resolution" value="2.60 A"/>
    <property type="chains" value="E=1-938"/>
</dbReference>
<dbReference type="PDB" id="8DPE">
    <property type="method" value="X-ray"/>
    <property type="resolution" value="1.53 A"/>
    <property type="chains" value="A=211-646"/>
</dbReference>
<dbReference type="PDB" id="8HK1">
    <property type="method" value="EM"/>
    <property type="resolution" value="2.70 A"/>
    <property type="chains" value="E=1-938"/>
</dbReference>
<dbReference type="PDBsum" id="7EVN"/>
<dbReference type="PDBsum" id="8DPE"/>
<dbReference type="PDBsum" id="8HK1"/>
<dbReference type="EMDB" id="EMD-31330"/>
<dbReference type="EMDB" id="EMD-34841"/>
<dbReference type="SMR" id="Q86XP3"/>
<dbReference type="BioGRID" id="116454">
    <property type="interactions" value="222"/>
</dbReference>
<dbReference type="CORUM" id="Q86XP3"/>
<dbReference type="FunCoup" id="Q86XP3">
    <property type="interactions" value="5607"/>
</dbReference>
<dbReference type="IntAct" id="Q86XP3">
    <property type="interactions" value="93"/>
</dbReference>
<dbReference type="MINT" id="Q86XP3"/>
<dbReference type="STRING" id="9606.ENSP00000464050"/>
<dbReference type="ChEMBL" id="CHEMBL4105782"/>
<dbReference type="GlyCosmos" id="Q86XP3">
    <property type="glycosylation" value="2 sites, 1 glycan"/>
</dbReference>
<dbReference type="GlyGen" id="Q86XP3">
    <property type="glycosylation" value="9 sites, 1 O-linked glycan (9 sites)"/>
</dbReference>
<dbReference type="iPTMnet" id="Q86XP3"/>
<dbReference type="MetOSite" id="Q86XP3"/>
<dbReference type="PhosphoSitePlus" id="Q86XP3"/>
<dbReference type="SwissPalm" id="Q86XP3"/>
<dbReference type="BioMuta" id="DDX42"/>
<dbReference type="DMDM" id="74750541"/>
<dbReference type="jPOST" id="Q86XP3"/>
<dbReference type="MassIVE" id="Q86XP3"/>
<dbReference type="PaxDb" id="9606-ENSP00000464050"/>
<dbReference type="PeptideAtlas" id="Q86XP3"/>
<dbReference type="ProteomicsDB" id="70312">
    <molecule id="Q86XP3-1"/>
</dbReference>
<dbReference type="ProteomicsDB" id="70313">
    <molecule id="Q86XP3-2"/>
</dbReference>
<dbReference type="Pumba" id="Q86XP3"/>
<dbReference type="Antibodypedia" id="18710">
    <property type="antibodies" value="96 antibodies from 19 providers"/>
</dbReference>
<dbReference type="DNASU" id="11325"/>
<dbReference type="Ensembl" id="ENST00000359353.9">
    <molecule id="Q86XP3-2"/>
    <property type="protein sequence ID" value="ENSP00000352308.5"/>
    <property type="gene ID" value="ENSG00000198231.14"/>
</dbReference>
<dbReference type="Ensembl" id="ENST00000389924.7">
    <molecule id="Q86XP3-1"/>
    <property type="protein sequence ID" value="ENSP00000374574.2"/>
    <property type="gene ID" value="ENSG00000198231.14"/>
</dbReference>
<dbReference type="Ensembl" id="ENST00000578681.5">
    <molecule id="Q86XP3-1"/>
    <property type="protein sequence ID" value="ENSP00000464050.1"/>
    <property type="gene ID" value="ENSG00000198231.14"/>
</dbReference>
<dbReference type="Ensembl" id="ENST00000583590.5">
    <molecule id="Q86XP3-1"/>
    <property type="protein sequence ID" value="ENSP00000463561.1"/>
    <property type="gene ID" value="ENSG00000198231.14"/>
</dbReference>
<dbReference type="GeneID" id="11325"/>
<dbReference type="KEGG" id="hsa:11325"/>
<dbReference type="MANE-Select" id="ENST00000389924.7">
    <property type="protein sequence ID" value="ENSP00000374574.2"/>
    <property type="RefSeq nucleotide sequence ID" value="NM_203499.3"/>
    <property type="RefSeq protein sequence ID" value="NP_987095.1"/>
</dbReference>
<dbReference type="UCSC" id="uc002jbu.5">
    <molecule id="Q86XP3-1"/>
    <property type="organism name" value="human"/>
</dbReference>
<dbReference type="AGR" id="HGNC:18676"/>
<dbReference type="CTD" id="11325"/>
<dbReference type="DisGeNET" id="11325"/>
<dbReference type="GeneCards" id="DDX42"/>
<dbReference type="HGNC" id="HGNC:18676">
    <property type="gene designation" value="DDX42"/>
</dbReference>
<dbReference type="HPA" id="ENSG00000198231">
    <property type="expression patterns" value="Low tissue specificity"/>
</dbReference>
<dbReference type="MIM" id="613369">
    <property type="type" value="gene"/>
</dbReference>
<dbReference type="neXtProt" id="NX_Q86XP3"/>
<dbReference type="OpenTargets" id="ENSG00000198231"/>
<dbReference type="PharmGKB" id="PA134875761"/>
<dbReference type="VEuPathDB" id="HostDB:ENSG00000198231"/>
<dbReference type="eggNOG" id="KOG0339">
    <property type="taxonomic scope" value="Eukaryota"/>
</dbReference>
<dbReference type="GeneTree" id="ENSGT00940000156559"/>
<dbReference type="InParanoid" id="Q86XP3"/>
<dbReference type="OMA" id="DHTWEQT"/>
<dbReference type="OrthoDB" id="196131at2759"/>
<dbReference type="PAN-GO" id="Q86XP3">
    <property type="GO annotations" value="1 GO annotation based on evolutionary models"/>
</dbReference>
<dbReference type="PhylomeDB" id="Q86XP3"/>
<dbReference type="TreeFam" id="TF300351"/>
<dbReference type="PathwayCommons" id="Q86XP3"/>
<dbReference type="Reactome" id="R-HSA-72163">
    <property type="pathway name" value="mRNA Splicing - Major Pathway"/>
</dbReference>
<dbReference type="Reactome" id="R-HSA-72165">
    <property type="pathway name" value="mRNA Splicing - Minor Pathway"/>
</dbReference>
<dbReference type="SignaLink" id="Q86XP3"/>
<dbReference type="BioGRID-ORCS" id="11325">
    <property type="hits" value="535 hits in 1174 CRISPR screens"/>
</dbReference>
<dbReference type="CD-CODE" id="91857CE7">
    <property type="entry name" value="Nucleolus"/>
</dbReference>
<dbReference type="ChiTaRS" id="DDX42">
    <property type="organism name" value="human"/>
</dbReference>
<dbReference type="GeneWiki" id="DDX42"/>
<dbReference type="GenomeRNAi" id="11325"/>
<dbReference type="Pharos" id="Q86XP3">
    <property type="development level" value="Tchem"/>
</dbReference>
<dbReference type="PRO" id="PR:Q86XP3"/>
<dbReference type="Proteomes" id="UP000005640">
    <property type="component" value="Chromosome 17"/>
</dbReference>
<dbReference type="RNAct" id="Q86XP3">
    <property type="molecule type" value="protein"/>
</dbReference>
<dbReference type="Bgee" id="ENSG00000198231">
    <property type="expression patterns" value="Expressed in body of pancreas and 205 other cell types or tissues"/>
</dbReference>
<dbReference type="ExpressionAtlas" id="Q86XP3">
    <property type="expression patterns" value="baseline and differential"/>
</dbReference>
<dbReference type="GO" id="GO:0015030">
    <property type="term" value="C:Cajal body"/>
    <property type="evidence" value="ECO:0007669"/>
    <property type="project" value="UniProtKB-SubCell"/>
</dbReference>
<dbReference type="GO" id="GO:0005737">
    <property type="term" value="C:cytoplasm"/>
    <property type="evidence" value="ECO:0000314"/>
    <property type="project" value="UniProtKB"/>
</dbReference>
<dbReference type="GO" id="GO:0005829">
    <property type="term" value="C:cytosol"/>
    <property type="evidence" value="ECO:0000314"/>
    <property type="project" value="HPA"/>
</dbReference>
<dbReference type="GO" id="GO:0016020">
    <property type="term" value="C:membrane"/>
    <property type="evidence" value="ECO:0007005"/>
    <property type="project" value="UniProtKB"/>
</dbReference>
<dbReference type="GO" id="GO:0016607">
    <property type="term" value="C:nuclear speck"/>
    <property type="evidence" value="ECO:0000314"/>
    <property type="project" value="HPA"/>
</dbReference>
<dbReference type="GO" id="GO:0005654">
    <property type="term" value="C:nucleoplasm"/>
    <property type="evidence" value="ECO:0000304"/>
    <property type="project" value="Reactome"/>
</dbReference>
<dbReference type="GO" id="GO:0005634">
    <property type="term" value="C:nucleus"/>
    <property type="evidence" value="ECO:0000314"/>
    <property type="project" value="UniProtKB"/>
</dbReference>
<dbReference type="GO" id="GO:0071004">
    <property type="term" value="C:U2-type prespliceosome"/>
    <property type="evidence" value="ECO:0000314"/>
    <property type="project" value="UniProtKB"/>
</dbReference>
<dbReference type="GO" id="GO:0005524">
    <property type="term" value="F:ATP binding"/>
    <property type="evidence" value="ECO:0007669"/>
    <property type="project" value="UniProtKB-KW"/>
</dbReference>
<dbReference type="GO" id="GO:0016887">
    <property type="term" value="F:ATP hydrolysis activity"/>
    <property type="evidence" value="ECO:0007669"/>
    <property type="project" value="RHEA"/>
</dbReference>
<dbReference type="GO" id="GO:0003723">
    <property type="term" value="F:RNA binding"/>
    <property type="evidence" value="ECO:0000314"/>
    <property type="project" value="FlyBase"/>
</dbReference>
<dbReference type="GO" id="GO:0003724">
    <property type="term" value="F:RNA helicase activity"/>
    <property type="evidence" value="ECO:0000314"/>
    <property type="project" value="FlyBase"/>
</dbReference>
<dbReference type="GO" id="GO:0008104">
    <property type="term" value="P:protein localization"/>
    <property type="evidence" value="ECO:0000314"/>
    <property type="project" value="UniProtKB"/>
</dbReference>
<dbReference type="GO" id="GO:0042981">
    <property type="term" value="P:regulation of apoptotic process"/>
    <property type="evidence" value="ECO:0000315"/>
    <property type="project" value="UniProtKB"/>
</dbReference>
<dbReference type="GO" id="GO:1903241">
    <property type="term" value="P:U2-type prespliceosome assembly"/>
    <property type="evidence" value="ECO:0000314"/>
    <property type="project" value="UniProtKB"/>
</dbReference>
<dbReference type="CDD" id="cd17952">
    <property type="entry name" value="DEADc_DDX42"/>
    <property type="match status" value="1"/>
</dbReference>
<dbReference type="CDD" id="cd18787">
    <property type="entry name" value="SF2_C_DEAD"/>
    <property type="match status" value="1"/>
</dbReference>
<dbReference type="FunFam" id="3.40.50.300:FF:000524">
    <property type="entry name" value="ATP-dependent RNA helicase DDX42"/>
    <property type="match status" value="1"/>
</dbReference>
<dbReference type="FunFam" id="3.40.50.300:FF:000079">
    <property type="entry name" value="probable ATP-dependent RNA helicase DDX17"/>
    <property type="match status" value="1"/>
</dbReference>
<dbReference type="Gene3D" id="3.40.50.300">
    <property type="entry name" value="P-loop containing nucleotide triphosphate hydrolases"/>
    <property type="match status" value="2"/>
</dbReference>
<dbReference type="InterPro" id="IPR011545">
    <property type="entry name" value="DEAD/DEAH_box_helicase_dom"/>
</dbReference>
<dbReference type="InterPro" id="IPR014001">
    <property type="entry name" value="Helicase_ATP-bd"/>
</dbReference>
<dbReference type="InterPro" id="IPR001650">
    <property type="entry name" value="Helicase_C-like"/>
</dbReference>
<dbReference type="InterPro" id="IPR027417">
    <property type="entry name" value="P-loop_NTPase"/>
</dbReference>
<dbReference type="InterPro" id="IPR000629">
    <property type="entry name" value="RNA-helicase_DEAD-box_CS"/>
</dbReference>
<dbReference type="InterPro" id="IPR014014">
    <property type="entry name" value="RNA_helicase_DEAD_Q_motif"/>
</dbReference>
<dbReference type="PANTHER" id="PTHR47958">
    <property type="entry name" value="ATP-DEPENDENT RNA HELICASE DBP3"/>
    <property type="match status" value="1"/>
</dbReference>
<dbReference type="Pfam" id="PF00270">
    <property type="entry name" value="DEAD"/>
    <property type="match status" value="1"/>
</dbReference>
<dbReference type="Pfam" id="PF00271">
    <property type="entry name" value="Helicase_C"/>
    <property type="match status" value="1"/>
</dbReference>
<dbReference type="SMART" id="SM00487">
    <property type="entry name" value="DEXDc"/>
    <property type="match status" value="1"/>
</dbReference>
<dbReference type="SMART" id="SM00490">
    <property type="entry name" value="HELICc"/>
    <property type="match status" value="1"/>
</dbReference>
<dbReference type="SUPFAM" id="SSF52540">
    <property type="entry name" value="P-loop containing nucleoside triphosphate hydrolases"/>
    <property type="match status" value="1"/>
</dbReference>
<dbReference type="PROSITE" id="PS00039">
    <property type="entry name" value="DEAD_ATP_HELICASE"/>
    <property type="match status" value="1"/>
</dbReference>
<dbReference type="PROSITE" id="PS51192">
    <property type="entry name" value="HELICASE_ATP_BIND_1"/>
    <property type="match status" value="1"/>
</dbReference>
<dbReference type="PROSITE" id="PS51194">
    <property type="entry name" value="HELICASE_CTER"/>
    <property type="match status" value="1"/>
</dbReference>
<dbReference type="PROSITE" id="PS51195">
    <property type="entry name" value="Q_MOTIF"/>
    <property type="match status" value="1"/>
</dbReference>
<reference key="1">
    <citation type="journal article" date="2000" name="Biochim. Biophys. Acta">
        <title>Identification of a novel human member of the DEAD box protein family.</title>
        <authorList>
            <person name="Suk K."/>
            <person name="Kim S."/>
            <person name="Kim Y.-H."/>
            <person name="Oh S.-H."/>
            <person name="Lee M.-K."/>
            <person name="Kim K.-W."/>
            <person name="Kim H.-D."/>
            <person name="Seo Y.-S."/>
            <person name="Lee M.-S."/>
        </authorList>
    </citation>
    <scope>NUCLEOTIDE SEQUENCE [MRNA] (ISOFORM 2)</scope>
    <scope>TISSUE SPECIFICITY</scope>
</reference>
<reference key="2">
    <citation type="submission" date="1999-12" db="EMBL/GenBank/DDBJ databases">
        <title>Expression of RNA helicase-related protein in human hair follicle.</title>
        <authorList>
            <person name="Ikeda A."/>
            <person name="Tsuritani K."/>
        </authorList>
    </citation>
    <scope>NUCLEOTIDE SEQUENCE [MRNA] (ISOFORM 2)</scope>
</reference>
<reference key="3">
    <citation type="journal article" date="2004" name="Nat. Genet.">
        <title>Complete sequencing and characterization of 21,243 full-length human cDNAs.</title>
        <authorList>
            <person name="Ota T."/>
            <person name="Suzuki Y."/>
            <person name="Nishikawa T."/>
            <person name="Otsuki T."/>
            <person name="Sugiyama T."/>
            <person name="Irie R."/>
            <person name="Wakamatsu A."/>
            <person name="Hayashi K."/>
            <person name="Sato H."/>
            <person name="Nagai K."/>
            <person name="Kimura K."/>
            <person name="Makita H."/>
            <person name="Sekine M."/>
            <person name="Obayashi M."/>
            <person name="Nishi T."/>
            <person name="Shibahara T."/>
            <person name="Tanaka T."/>
            <person name="Ishii S."/>
            <person name="Yamamoto J."/>
            <person name="Saito K."/>
            <person name="Kawai Y."/>
            <person name="Isono Y."/>
            <person name="Nakamura Y."/>
            <person name="Nagahari K."/>
            <person name="Murakami K."/>
            <person name="Yasuda T."/>
            <person name="Iwayanagi T."/>
            <person name="Wagatsuma M."/>
            <person name="Shiratori A."/>
            <person name="Sudo H."/>
            <person name="Hosoiri T."/>
            <person name="Kaku Y."/>
            <person name="Kodaira H."/>
            <person name="Kondo H."/>
            <person name="Sugawara M."/>
            <person name="Takahashi M."/>
            <person name="Kanda K."/>
            <person name="Yokoi T."/>
            <person name="Furuya T."/>
            <person name="Kikkawa E."/>
            <person name="Omura Y."/>
            <person name="Abe K."/>
            <person name="Kamihara K."/>
            <person name="Katsuta N."/>
            <person name="Sato K."/>
            <person name="Tanikawa M."/>
            <person name="Yamazaki M."/>
            <person name="Ninomiya K."/>
            <person name="Ishibashi T."/>
            <person name="Yamashita H."/>
            <person name="Murakawa K."/>
            <person name="Fujimori K."/>
            <person name="Tanai H."/>
            <person name="Kimata M."/>
            <person name="Watanabe M."/>
            <person name="Hiraoka S."/>
            <person name="Chiba Y."/>
            <person name="Ishida S."/>
            <person name="Ono Y."/>
            <person name="Takiguchi S."/>
            <person name="Watanabe S."/>
            <person name="Yosida M."/>
            <person name="Hotuta T."/>
            <person name="Kusano J."/>
            <person name="Kanehori K."/>
            <person name="Takahashi-Fujii A."/>
            <person name="Hara H."/>
            <person name="Tanase T.-O."/>
            <person name="Nomura Y."/>
            <person name="Togiya S."/>
            <person name="Komai F."/>
            <person name="Hara R."/>
            <person name="Takeuchi K."/>
            <person name="Arita M."/>
            <person name="Imose N."/>
            <person name="Musashino K."/>
            <person name="Yuuki H."/>
            <person name="Oshima A."/>
            <person name="Sasaki N."/>
            <person name="Aotsuka S."/>
            <person name="Yoshikawa Y."/>
            <person name="Matsunawa H."/>
            <person name="Ichihara T."/>
            <person name="Shiohata N."/>
            <person name="Sano S."/>
            <person name="Moriya S."/>
            <person name="Momiyama H."/>
            <person name="Satoh N."/>
            <person name="Takami S."/>
            <person name="Terashima Y."/>
            <person name="Suzuki O."/>
            <person name="Nakagawa S."/>
            <person name="Senoh A."/>
            <person name="Mizoguchi H."/>
            <person name="Goto Y."/>
            <person name="Shimizu F."/>
            <person name="Wakebe H."/>
            <person name="Hishigaki H."/>
            <person name="Watanabe T."/>
            <person name="Sugiyama A."/>
            <person name="Takemoto M."/>
            <person name="Kawakami B."/>
            <person name="Yamazaki M."/>
            <person name="Watanabe K."/>
            <person name="Kumagai A."/>
            <person name="Itakura S."/>
            <person name="Fukuzumi Y."/>
            <person name="Fujimori Y."/>
            <person name="Komiyama M."/>
            <person name="Tashiro H."/>
            <person name="Tanigami A."/>
            <person name="Fujiwara T."/>
            <person name="Ono T."/>
            <person name="Yamada K."/>
            <person name="Fujii Y."/>
            <person name="Ozaki K."/>
            <person name="Hirao M."/>
            <person name="Ohmori Y."/>
            <person name="Kawabata A."/>
            <person name="Hikiji T."/>
            <person name="Kobatake N."/>
            <person name="Inagaki H."/>
            <person name="Ikema Y."/>
            <person name="Okamoto S."/>
            <person name="Okitani R."/>
            <person name="Kawakami T."/>
            <person name="Noguchi S."/>
            <person name="Itoh T."/>
            <person name="Shigeta K."/>
            <person name="Senba T."/>
            <person name="Matsumura K."/>
            <person name="Nakajima Y."/>
            <person name="Mizuno T."/>
            <person name="Morinaga M."/>
            <person name="Sasaki M."/>
            <person name="Togashi T."/>
            <person name="Oyama M."/>
            <person name="Hata H."/>
            <person name="Watanabe M."/>
            <person name="Komatsu T."/>
            <person name="Mizushima-Sugano J."/>
            <person name="Satoh T."/>
            <person name="Shirai Y."/>
            <person name="Takahashi Y."/>
            <person name="Nakagawa K."/>
            <person name="Okumura K."/>
            <person name="Nagase T."/>
            <person name="Nomura N."/>
            <person name="Kikuchi H."/>
            <person name="Masuho Y."/>
            <person name="Yamashita R."/>
            <person name="Nakai K."/>
            <person name="Yada T."/>
            <person name="Nakamura Y."/>
            <person name="Ohara O."/>
            <person name="Isogai T."/>
            <person name="Sugano S."/>
        </authorList>
    </citation>
    <scope>NUCLEOTIDE SEQUENCE [LARGE SCALE MRNA] (ISOFORM 2)</scope>
    <source>
        <tissue>Trachea</tissue>
    </source>
</reference>
<reference key="4">
    <citation type="journal article" date="2006" name="Nature">
        <title>DNA sequence of human chromosome 17 and analysis of rearrangement in the human lineage.</title>
        <authorList>
            <person name="Zody M.C."/>
            <person name="Garber M."/>
            <person name="Adams D.J."/>
            <person name="Sharpe T."/>
            <person name="Harrow J."/>
            <person name="Lupski J.R."/>
            <person name="Nicholson C."/>
            <person name="Searle S.M."/>
            <person name="Wilming L."/>
            <person name="Young S.K."/>
            <person name="Abouelleil A."/>
            <person name="Allen N.R."/>
            <person name="Bi W."/>
            <person name="Bloom T."/>
            <person name="Borowsky M.L."/>
            <person name="Bugalter B.E."/>
            <person name="Butler J."/>
            <person name="Chang J.L."/>
            <person name="Chen C.-K."/>
            <person name="Cook A."/>
            <person name="Corum B."/>
            <person name="Cuomo C.A."/>
            <person name="de Jong P.J."/>
            <person name="DeCaprio D."/>
            <person name="Dewar K."/>
            <person name="FitzGerald M."/>
            <person name="Gilbert J."/>
            <person name="Gibson R."/>
            <person name="Gnerre S."/>
            <person name="Goldstein S."/>
            <person name="Grafham D.V."/>
            <person name="Grocock R."/>
            <person name="Hafez N."/>
            <person name="Hagopian D.S."/>
            <person name="Hart E."/>
            <person name="Norman C.H."/>
            <person name="Humphray S."/>
            <person name="Jaffe D.B."/>
            <person name="Jones M."/>
            <person name="Kamal M."/>
            <person name="Khodiyar V.K."/>
            <person name="LaButti K."/>
            <person name="Laird G."/>
            <person name="Lehoczky J."/>
            <person name="Liu X."/>
            <person name="Lokyitsang T."/>
            <person name="Loveland J."/>
            <person name="Lui A."/>
            <person name="Macdonald P."/>
            <person name="Major J.E."/>
            <person name="Matthews L."/>
            <person name="Mauceli E."/>
            <person name="McCarroll S.A."/>
            <person name="Mihalev A.H."/>
            <person name="Mudge J."/>
            <person name="Nguyen C."/>
            <person name="Nicol R."/>
            <person name="O'Leary S.B."/>
            <person name="Osoegawa K."/>
            <person name="Schwartz D.C."/>
            <person name="Shaw-Smith C."/>
            <person name="Stankiewicz P."/>
            <person name="Steward C."/>
            <person name="Swarbreck D."/>
            <person name="Venkataraman V."/>
            <person name="Whittaker C.A."/>
            <person name="Yang X."/>
            <person name="Zimmer A.R."/>
            <person name="Bradley A."/>
            <person name="Hubbard T."/>
            <person name="Birren B.W."/>
            <person name="Rogers J."/>
            <person name="Lander E.S."/>
            <person name="Nusbaum C."/>
        </authorList>
    </citation>
    <scope>NUCLEOTIDE SEQUENCE [LARGE SCALE GENOMIC DNA]</scope>
</reference>
<reference key="5">
    <citation type="submission" date="2005-09" db="EMBL/GenBank/DDBJ databases">
        <authorList>
            <person name="Mural R.J."/>
            <person name="Istrail S."/>
            <person name="Sutton G.G."/>
            <person name="Florea L."/>
            <person name="Halpern A.L."/>
            <person name="Mobarry C.M."/>
            <person name="Lippert R."/>
            <person name="Walenz B."/>
            <person name="Shatkay H."/>
            <person name="Dew I."/>
            <person name="Miller J.R."/>
            <person name="Flanigan M.J."/>
            <person name="Edwards N.J."/>
            <person name="Bolanos R."/>
            <person name="Fasulo D."/>
            <person name="Halldorsson B.V."/>
            <person name="Hannenhalli S."/>
            <person name="Turner R."/>
            <person name="Yooseph S."/>
            <person name="Lu F."/>
            <person name="Nusskern D.R."/>
            <person name="Shue B.C."/>
            <person name="Zheng X.H."/>
            <person name="Zhong F."/>
            <person name="Delcher A.L."/>
            <person name="Huson D.H."/>
            <person name="Kravitz S.A."/>
            <person name="Mouchard L."/>
            <person name="Reinert K."/>
            <person name="Remington K.A."/>
            <person name="Clark A.G."/>
            <person name="Waterman M.S."/>
            <person name="Eichler E.E."/>
            <person name="Adams M.D."/>
            <person name="Hunkapiller M.W."/>
            <person name="Myers E.W."/>
            <person name="Venter J.C."/>
        </authorList>
    </citation>
    <scope>NUCLEOTIDE SEQUENCE [LARGE SCALE GENOMIC DNA]</scope>
</reference>
<reference key="6">
    <citation type="journal article" date="2004" name="Genome Res.">
        <title>The status, quality, and expansion of the NIH full-length cDNA project: the Mammalian Gene Collection (MGC).</title>
        <authorList>
            <consortium name="The MGC Project Team"/>
        </authorList>
    </citation>
    <scope>NUCLEOTIDE SEQUENCE [LARGE SCALE MRNA] (ISOFORMS 1 AND 2)</scope>
    <source>
        <tissue>Eye</tissue>
        <tissue>Pancreas</tissue>
        <tissue>Uterus</tissue>
    </source>
</reference>
<reference key="7">
    <citation type="journal article" date="2007" name="BMC Genomics">
        <title>The full-ORF clone resource of the German cDNA consortium.</title>
        <authorList>
            <person name="Bechtel S."/>
            <person name="Rosenfelder H."/>
            <person name="Duda A."/>
            <person name="Schmidt C.P."/>
            <person name="Ernst U."/>
            <person name="Wellenreuther R."/>
            <person name="Mehrle A."/>
            <person name="Schuster C."/>
            <person name="Bahr A."/>
            <person name="Bloecker H."/>
            <person name="Heubner D."/>
            <person name="Hoerlein A."/>
            <person name="Michel G."/>
            <person name="Wedler H."/>
            <person name="Koehrer K."/>
            <person name="Ottenwaelder B."/>
            <person name="Poustka A."/>
            <person name="Wiemann S."/>
            <person name="Schupp I."/>
        </authorList>
    </citation>
    <scope>NUCLEOTIDE SEQUENCE [LARGE SCALE MRNA] OF 574-938 (ISOFORMS 1/2)</scope>
    <source>
        <tissue>Uterus</tissue>
    </source>
</reference>
<reference key="8">
    <citation type="journal article" date="2002" name="EMBO J.">
        <title>Characterization of novel SF3b and 17S U2 snRNP proteins, including a human Prp5p homologue and an SF3b DEAD-box protein.</title>
        <authorList>
            <person name="Will C.L."/>
            <person name="Urlaub H."/>
            <person name="Achsel T."/>
            <person name="Gentzel M."/>
            <person name="Wilm M."/>
            <person name="Luehrmann R."/>
        </authorList>
    </citation>
    <scope>IDENTIFICATION BY MASS SPECTROMETRY (ISOFORM 2)</scope>
    <scope>SUBCELLULAR LOCATION</scope>
    <scope>IDENTIFICATION IN THE SF3B COMPLEX</scope>
</reference>
<reference key="9">
    <citation type="journal article" date="2006" name="Cell">
        <title>Global, in vivo, and site-specific phosphorylation dynamics in signaling networks.</title>
        <authorList>
            <person name="Olsen J.V."/>
            <person name="Blagoev B."/>
            <person name="Gnad F."/>
            <person name="Macek B."/>
            <person name="Kumar C."/>
            <person name="Mortensen P."/>
            <person name="Mann M."/>
        </authorList>
    </citation>
    <scope>PHOSPHORYLATION [LARGE SCALE ANALYSIS] AT SER-109 AND SER-111</scope>
    <scope>IDENTIFICATION BY MASS SPECTROMETRY [LARGE SCALE ANALYSIS]</scope>
    <source>
        <tissue>Cervix carcinoma</tissue>
    </source>
</reference>
<reference key="10">
    <citation type="journal article" date="2006" name="Nucleic Acids Res.">
        <title>Ddx42p -- a human DEAD box protein with RNA chaperone activities.</title>
        <authorList>
            <person name="Uhlmann-Schiffler H."/>
            <person name="Jalal C."/>
            <person name="Stahl H."/>
        </authorList>
    </citation>
    <scope>FUNCTION</scope>
    <scope>CATALYTIC ACTIVITY</scope>
    <scope>RNA-BINDING</scope>
    <scope>TISSUE SPECIFICITY</scope>
    <scope>SUBCELLULAR LOCATION</scope>
</reference>
<reference key="11">
    <citation type="journal article" date="2008" name="Proc. Natl. Acad. Sci. U.S.A.">
        <title>A quantitative atlas of mitotic phosphorylation.</title>
        <authorList>
            <person name="Dephoure N."/>
            <person name="Zhou C."/>
            <person name="Villen J."/>
            <person name="Beausoleil S.A."/>
            <person name="Bakalarski C.E."/>
            <person name="Elledge S.J."/>
            <person name="Gygi S.P."/>
        </authorList>
    </citation>
    <scope>PHOSPHORYLATION [LARGE SCALE ANALYSIS] AT SER-104; SER-109; SER-111; SER-185 AND SER-754</scope>
    <scope>IDENTIFICATION BY MASS SPECTROMETRY [LARGE SCALE ANALYSIS]</scope>
    <source>
        <tissue>Cervix carcinoma</tissue>
    </source>
</reference>
<reference key="12">
    <citation type="journal article" date="2009" name="Anal. Chem.">
        <title>Lys-N and trypsin cover complementary parts of the phosphoproteome in a refined SCX-based approach.</title>
        <authorList>
            <person name="Gauci S."/>
            <person name="Helbig A.O."/>
            <person name="Slijper M."/>
            <person name="Krijgsveld J."/>
            <person name="Heck A.J."/>
            <person name="Mohammed S."/>
        </authorList>
    </citation>
    <scope>IDENTIFICATION BY MASS SPECTROMETRY [LARGE SCALE ANALYSIS]</scope>
</reference>
<reference key="13">
    <citation type="journal article" date="2009" name="Oncogene">
        <title>The DEAD box protein Ddx42p modulates the function of ASPP2, a stimulator of apoptosis.</title>
        <authorList>
            <person name="Uhlmann-Schiffler H."/>
            <person name="Kiermayer S."/>
            <person name="Stahl H."/>
        </authorList>
    </citation>
    <scope>FUNCTION</scope>
    <scope>INTERACTION WITH TP53BP2</scope>
    <scope>SUBCELLULAR LOCATION</scope>
</reference>
<reference key="14">
    <citation type="journal article" date="2009" name="Sci. Signal.">
        <title>Quantitative phosphoproteomic analysis of T cell receptor signaling reveals system-wide modulation of protein-protein interactions.</title>
        <authorList>
            <person name="Mayya V."/>
            <person name="Lundgren D.H."/>
            <person name="Hwang S.-I."/>
            <person name="Rezaul K."/>
            <person name="Wu L."/>
            <person name="Eng J.K."/>
            <person name="Rodionov V."/>
            <person name="Han D.K."/>
        </authorList>
    </citation>
    <scope>PHOSPHORYLATION [LARGE SCALE ANALYSIS] AT SER-109 AND SER-111</scope>
    <scope>IDENTIFICATION BY MASS SPECTROMETRY [LARGE SCALE ANALYSIS]</scope>
    <source>
        <tissue>Leukemic T-cell</tissue>
    </source>
</reference>
<reference key="15">
    <citation type="journal article" date="2009" name="Science">
        <title>Lysine acetylation targets protein complexes and co-regulates major cellular functions.</title>
        <authorList>
            <person name="Choudhary C."/>
            <person name="Kumar C."/>
            <person name="Gnad F."/>
            <person name="Nielsen M.L."/>
            <person name="Rehman M."/>
            <person name="Walther T.C."/>
            <person name="Olsen J.V."/>
            <person name="Mann M."/>
        </authorList>
    </citation>
    <scope>ACETYLATION [LARGE SCALE ANALYSIS] AT LYS-5</scope>
    <scope>IDENTIFICATION BY MASS SPECTROMETRY [LARGE SCALE ANALYSIS]</scope>
</reference>
<reference key="16">
    <citation type="journal article" date="2010" name="Sci. Signal.">
        <title>Quantitative phosphoproteomics reveals widespread full phosphorylation site occupancy during mitosis.</title>
        <authorList>
            <person name="Olsen J.V."/>
            <person name="Vermeulen M."/>
            <person name="Santamaria A."/>
            <person name="Kumar C."/>
            <person name="Miller M.L."/>
            <person name="Jensen L.J."/>
            <person name="Gnad F."/>
            <person name="Cox J."/>
            <person name="Jensen T.S."/>
            <person name="Nigg E.A."/>
            <person name="Brunak S."/>
            <person name="Mann M."/>
        </authorList>
    </citation>
    <scope>PHOSPHORYLATION [LARGE SCALE ANALYSIS] AT SER-109 AND SER-111</scope>
    <scope>IDENTIFICATION BY MASS SPECTROMETRY [LARGE SCALE ANALYSIS]</scope>
    <source>
        <tissue>Cervix carcinoma</tissue>
    </source>
</reference>
<reference key="17">
    <citation type="journal article" date="2011" name="BMC Syst. Biol.">
        <title>Initial characterization of the human central proteome.</title>
        <authorList>
            <person name="Burkard T.R."/>
            <person name="Planyavsky M."/>
            <person name="Kaupe I."/>
            <person name="Breitwieser F.P."/>
            <person name="Buerckstuemmer T."/>
            <person name="Bennett K.L."/>
            <person name="Superti-Furga G."/>
            <person name="Colinge J."/>
        </authorList>
    </citation>
    <scope>IDENTIFICATION BY MASS SPECTROMETRY [LARGE SCALE ANALYSIS]</scope>
</reference>
<reference key="18">
    <citation type="journal article" date="2011" name="Sci. Signal.">
        <title>System-wide temporal characterization of the proteome and phosphoproteome of human embryonic stem cell differentiation.</title>
        <authorList>
            <person name="Rigbolt K.T."/>
            <person name="Prokhorova T.A."/>
            <person name="Akimov V."/>
            <person name="Henningsen J."/>
            <person name="Johansen P.T."/>
            <person name="Kratchmarova I."/>
            <person name="Kassem M."/>
            <person name="Mann M."/>
            <person name="Olsen J.V."/>
            <person name="Blagoev B."/>
        </authorList>
    </citation>
    <scope>IDENTIFICATION BY MASS SPECTROMETRY [LARGE SCALE ANALYSIS]</scope>
</reference>
<reference key="19">
    <citation type="journal article" date="2013" name="J. Proteome Res.">
        <title>Toward a comprehensive characterization of a human cancer cell phosphoproteome.</title>
        <authorList>
            <person name="Zhou H."/>
            <person name="Di Palma S."/>
            <person name="Preisinger C."/>
            <person name="Peng M."/>
            <person name="Polat A.N."/>
            <person name="Heck A.J."/>
            <person name="Mohammed S."/>
        </authorList>
    </citation>
    <scope>PHOSPHORYLATION [LARGE SCALE ANALYSIS] AT SER-58; SER-185 AND SER-754</scope>
    <scope>IDENTIFICATION BY MASS SPECTROMETRY [LARGE SCALE ANALYSIS]</scope>
    <source>
        <tissue>Cervix carcinoma</tissue>
        <tissue>Erythroleukemia</tissue>
    </source>
</reference>
<reference key="20">
    <citation type="journal article" date="2014" name="J. Proteomics">
        <title>An enzyme assisted RP-RPLC approach for in-depth analysis of human liver phosphoproteome.</title>
        <authorList>
            <person name="Bian Y."/>
            <person name="Song C."/>
            <person name="Cheng K."/>
            <person name="Dong M."/>
            <person name="Wang F."/>
            <person name="Huang J."/>
            <person name="Sun D."/>
            <person name="Wang L."/>
            <person name="Ye M."/>
            <person name="Zou H."/>
        </authorList>
    </citation>
    <scope>PHOSPHORYLATION [LARGE SCALE ANALYSIS] AT SER-96</scope>
    <scope>IDENTIFICATION BY MASS SPECTROMETRY [LARGE SCALE ANALYSIS]</scope>
    <source>
        <tissue>Liver</tissue>
    </source>
</reference>
<reference key="21">
    <citation type="journal article" date="2014" name="Mol. Cell. Proteomics">
        <title>Immunoaffinity enrichment and mass spectrometry analysis of protein methylation.</title>
        <authorList>
            <person name="Guo A."/>
            <person name="Gu H."/>
            <person name="Zhou J."/>
            <person name="Mulhern D."/>
            <person name="Wang Y."/>
            <person name="Lee K.A."/>
            <person name="Yang V."/>
            <person name="Aguiar M."/>
            <person name="Kornhauser J."/>
            <person name="Jia X."/>
            <person name="Ren J."/>
            <person name="Beausoleil S.A."/>
            <person name="Silva J.C."/>
            <person name="Vemulapalli V."/>
            <person name="Bedford M.T."/>
            <person name="Comb M.J."/>
        </authorList>
    </citation>
    <scope>METHYLATION [LARGE SCALE ANALYSIS] AT ARG-12</scope>
    <scope>IDENTIFICATION BY MASS SPECTROMETRY [LARGE SCALE ANALYSIS]</scope>
    <source>
        <tissue>Colon carcinoma</tissue>
    </source>
</reference>
<reference key="22">
    <citation type="journal article" date="2017" name="Nat. Struct. Mol. Biol.">
        <title>Site-specific mapping of the human SUMO proteome reveals co-modification with phosphorylation.</title>
        <authorList>
            <person name="Hendriks I.A."/>
            <person name="Lyon D."/>
            <person name="Young C."/>
            <person name="Jensen L.J."/>
            <person name="Vertegaal A.C."/>
            <person name="Nielsen M.L."/>
        </authorList>
    </citation>
    <scope>SUMOYLATION [LARGE SCALE ANALYSIS] AT LYS-899</scope>
    <scope>IDENTIFICATION BY MASS SPECTROMETRY [LARGE SCALE ANALYSIS]</scope>
</reference>
<reference evidence="18" key="23">
    <citation type="journal article" date="2023" name="Nat. Commun.">
        <title>Mechanisms of the RNA helicases DDX42 and DDX46 in human U2 snRNP assembly.</title>
        <authorList>
            <person name="Yang F."/>
            <person name="Bian T."/>
            <person name="Zhan X."/>
            <person name="Chen Z."/>
            <person name="Xing Z."/>
            <person name="Larsen N.A."/>
            <person name="Zhang X."/>
            <person name="Shi Y."/>
        </authorList>
    </citation>
    <scope>STRUCTURE BY ELECTRON MICROSCOPY (2.70 ANGSTROMS) IN COMPLEX WITH THE 17S U2 SNRNP COMPLEX</scope>
    <scope>FUNCTION</scope>
    <scope>IDENTIFICATION IN THE 17S U2 SNRNP COMPLEX</scope>
</reference>
<gene>
    <name evidence="14 17" type="primary">DDX42</name>
</gene>